<protein>
    <recommendedName>
        <fullName evidence="1">Large ribosomal subunit protein bL33</fullName>
    </recommendedName>
    <alternativeName>
        <fullName evidence="2">50S ribosomal protein L33</fullName>
    </alternativeName>
</protein>
<proteinExistence type="inferred from homology"/>
<organism>
    <name type="scientific">Nocardioides sp. (strain ATCC BAA-499 / JS614)</name>
    <dbReference type="NCBI Taxonomy" id="196162"/>
    <lineage>
        <taxon>Bacteria</taxon>
        <taxon>Bacillati</taxon>
        <taxon>Actinomycetota</taxon>
        <taxon>Actinomycetes</taxon>
        <taxon>Propionibacteriales</taxon>
        <taxon>Nocardioidaceae</taxon>
        <taxon>Nocardioides</taxon>
    </lineage>
</organism>
<name>RL33_NOCSJ</name>
<feature type="chain" id="PRO_0000356594" description="Large ribosomal subunit protein bL33">
    <location>
        <begin position="1"/>
        <end position="56"/>
    </location>
</feature>
<keyword id="KW-1185">Reference proteome</keyword>
<keyword id="KW-0687">Ribonucleoprotein</keyword>
<keyword id="KW-0689">Ribosomal protein</keyword>
<gene>
    <name evidence="1" type="primary">rpmG</name>
    <name type="ordered locus">Noca_0668</name>
</gene>
<dbReference type="EMBL" id="CP000509">
    <property type="protein sequence ID" value="ABL80194.1"/>
    <property type="molecule type" value="Genomic_DNA"/>
</dbReference>
<dbReference type="RefSeq" id="WP_011754143.1">
    <property type="nucleotide sequence ID" value="NC_008699.1"/>
</dbReference>
<dbReference type="SMR" id="A1SEF9"/>
<dbReference type="STRING" id="196162.Noca_0668"/>
<dbReference type="KEGG" id="nca:Noca_0668"/>
<dbReference type="eggNOG" id="COG0267">
    <property type="taxonomic scope" value="Bacteria"/>
</dbReference>
<dbReference type="HOGENOM" id="CLU_190949_0_2_11"/>
<dbReference type="OrthoDB" id="21586at2"/>
<dbReference type="Proteomes" id="UP000000640">
    <property type="component" value="Chromosome"/>
</dbReference>
<dbReference type="GO" id="GO:0005737">
    <property type="term" value="C:cytoplasm"/>
    <property type="evidence" value="ECO:0007669"/>
    <property type="project" value="UniProtKB-ARBA"/>
</dbReference>
<dbReference type="GO" id="GO:1990904">
    <property type="term" value="C:ribonucleoprotein complex"/>
    <property type="evidence" value="ECO:0007669"/>
    <property type="project" value="UniProtKB-KW"/>
</dbReference>
<dbReference type="GO" id="GO:0005840">
    <property type="term" value="C:ribosome"/>
    <property type="evidence" value="ECO:0007669"/>
    <property type="project" value="UniProtKB-KW"/>
</dbReference>
<dbReference type="GO" id="GO:0003735">
    <property type="term" value="F:structural constituent of ribosome"/>
    <property type="evidence" value="ECO:0007669"/>
    <property type="project" value="InterPro"/>
</dbReference>
<dbReference type="GO" id="GO:0006412">
    <property type="term" value="P:translation"/>
    <property type="evidence" value="ECO:0007669"/>
    <property type="project" value="UniProtKB-UniRule"/>
</dbReference>
<dbReference type="Gene3D" id="2.20.28.120">
    <property type="entry name" value="Ribosomal protein L33"/>
    <property type="match status" value="1"/>
</dbReference>
<dbReference type="HAMAP" id="MF_00294">
    <property type="entry name" value="Ribosomal_bL33"/>
    <property type="match status" value="1"/>
</dbReference>
<dbReference type="InterPro" id="IPR001705">
    <property type="entry name" value="Ribosomal_bL33"/>
</dbReference>
<dbReference type="InterPro" id="IPR018264">
    <property type="entry name" value="Ribosomal_bL33_CS"/>
</dbReference>
<dbReference type="InterPro" id="IPR038584">
    <property type="entry name" value="Ribosomal_bL33_sf"/>
</dbReference>
<dbReference type="InterPro" id="IPR011332">
    <property type="entry name" value="Ribosomal_zn-bd"/>
</dbReference>
<dbReference type="NCBIfam" id="NF001764">
    <property type="entry name" value="PRK00504.1"/>
    <property type="match status" value="1"/>
</dbReference>
<dbReference type="NCBIfam" id="NF001860">
    <property type="entry name" value="PRK00595.1"/>
    <property type="match status" value="1"/>
</dbReference>
<dbReference type="NCBIfam" id="TIGR01023">
    <property type="entry name" value="rpmG_bact"/>
    <property type="match status" value="1"/>
</dbReference>
<dbReference type="PANTHER" id="PTHR43168">
    <property type="entry name" value="50S RIBOSOMAL PROTEIN L33, CHLOROPLASTIC"/>
    <property type="match status" value="1"/>
</dbReference>
<dbReference type="PANTHER" id="PTHR43168:SF2">
    <property type="entry name" value="LARGE RIBOSOMAL SUBUNIT PROTEIN BL33C"/>
    <property type="match status" value="1"/>
</dbReference>
<dbReference type="Pfam" id="PF00471">
    <property type="entry name" value="Ribosomal_L33"/>
    <property type="match status" value="1"/>
</dbReference>
<dbReference type="SUPFAM" id="SSF57829">
    <property type="entry name" value="Zn-binding ribosomal proteins"/>
    <property type="match status" value="1"/>
</dbReference>
<dbReference type="PROSITE" id="PS00582">
    <property type="entry name" value="RIBOSOMAL_L33"/>
    <property type="match status" value="1"/>
</dbReference>
<accession>A1SEF9</accession>
<comment type="similarity">
    <text evidence="1">Belongs to the bacterial ribosomal protein bL33 family.</text>
</comment>
<evidence type="ECO:0000255" key="1">
    <source>
        <dbReference type="HAMAP-Rule" id="MF_00294"/>
    </source>
</evidence>
<evidence type="ECO:0000305" key="2"/>
<sequence length="56" mass="6707">MASKTSDVRPKITLACVECKERNYITKKNRRNDPDRMELSKFCPRCRKHTAHRETR</sequence>
<reference key="1">
    <citation type="submission" date="2006-12" db="EMBL/GenBank/DDBJ databases">
        <title>Complete sequence of chromosome 1 of Nocardioides sp. JS614.</title>
        <authorList>
            <person name="Copeland A."/>
            <person name="Lucas S."/>
            <person name="Lapidus A."/>
            <person name="Barry K."/>
            <person name="Detter J.C."/>
            <person name="Glavina del Rio T."/>
            <person name="Hammon N."/>
            <person name="Israni S."/>
            <person name="Dalin E."/>
            <person name="Tice H."/>
            <person name="Pitluck S."/>
            <person name="Thompson L.S."/>
            <person name="Brettin T."/>
            <person name="Bruce D."/>
            <person name="Han C."/>
            <person name="Tapia R."/>
            <person name="Schmutz J."/>
            <person name="Larimer F."/>
            <person name="Land M."/>
            <person name="Hauser L."/>
            <person name="Kyrpides N."/>
            <person name="Kim E."/>
            <person name="Mattes T."/>
            <person name="Gossett J."/>
            <person name="Richardson P."/>
        </authorList>
    </citation>
    <scope>NUCLEOTIDE SEQUENCE [LARGE SCALE GENOMIC DNA]</scope>
    <source>
        <strain>ATCC BAA-499 / JS614</strain>
    </source>
</reference>